<dbReference type="EC" id="3.6.1.9" evidence="1"/>
<dbReference type="EMBL" id="CP000551">
    <property type="protein sequence ID" value="ABM70620.1"/>
    <property type="molecule type" value="Genomic_DNA"/>
</dbReference>
<dbReference type="RefSeq" id="WP_011818758.1">
    <property type="nucleotide sequence ID" value="NC_008816.1"/>
</dbReference>
<dbReference type="SMR" id="A2BS59"/>
<dbReference type="STRING" id="146891.A9601_13361"/>
<dbReference type="KEGG" id="pmb:A9601_13361"/>
<dbReference type="eggNOG" id="COG0424">
    <property type="taxonomic scope" value="Bacteria"/>
</dbReference>
<dbReference type="HOGENOM" id="CLU_040416_1_2_3"/>
<dbReference type="OrthoDB" id="9807767at2"/>
<dbReference type="Proteomes" id="UP000002590">
    <property type="component" value="Chromosome"/>
</dbReference>
<dbReference type="GO" id="GO:0005737">
    <property type="term" value="C:cytoplasm"/>
    <property type="evidence" value="ECO:0007669"/>
    <property type="project" value="UniProtKB-SubCell"/>
</dbReference>
<dbReference type="GO" id="GO:0047429">
    <property type="term" value="F:nucleoside triphosphate diphosphatase activity"/>
    <property type="evidence" value="ECO:0007669"/>
    <property type="project" value="UniProtKB-EC"/>
</dbReference>
<dbReference type="GO" id="GO:0009117">
    <property type="term" value="P:nucleotide metabolic process"/>
    <property type="evidence" value="ECO:0007669"/>
    <property type="project" value="UniProtKB-KW"/>
</dbReference>
<dbReference type="CDD" id="cd00555">
    <property type="entry name" value="Maf"/>
    <property type="match status" value="1"/>
</dbReference>
<dbReference type="Gene3D" id="3.90.950.10">
    <property type="match status" value="1"/>
</dbReference>
<dbReference type="HAMAP" id="MF_00528">
    <property type="entry name" value="Maf"/>
    <property type="match status" value="1"/>
</dbReference>
<dbReference type="InterPro" id="IPR029001">
    <property type="entry name" value="ITPase-like_fam"/>
</dbReference>
<dbReference type="InterPro" id="IPR003697">
    <property type="entry name" value="Maf-like"/>
</dbReference>
<dbReference type="NCBIfam" id="TIGR00172">
    <property type="entry name" value="maf"/>
    <property type="match status" value="1"/>
</dbReference>
<dbReference type="PANTHER" id="PTHR43213">
    <property type="entry name" value="BIFUNCTIONAL DTTP/UTP PYROPHOSPHATASE/METHYLTRANSFERASE PROTEIN-RELATED"/>
    <property type="match status" value="1"/>
</dbReference>
<dbReference type="PANTHER" id="PTHR43213:SF5">
    <property type="entry name" value="BIFUNCTIONAL DTTP_UTP PYROPHOSPHATASE_METHYLTRANSFERASE PROTEIN-RELATED"/>
    <property type="match status" value="1"/>
</dbReference>
<dbReference type="Pfam" id="PF02545">
    <property type="entry name" value="Maf"/>
    <property type="match status" value="1"/>
</dbReference>
<dbReference type="PIRSF" id="PIRSF006305">
    <property type="entry name" value="Maf"/>
    <property type="match status" value="1"/>
</dbReference>
<dbReference type="SUPFAM" id="SSF52972">
    <property type="entry name" value="ITPase-like"/>
    <property type="match status" value="1"/>
</dbReference>
<organism>
    <name type="scientific">Prochlorococcus marinus (strain AS9601)</name>
    <dbReference type="NCBI Taxonomy" id="146891"/>
    <lineage>
        <taxon>Bacteria</taxon>
        <taxon>Bacillati</taxon>
        <taxon>Cyanobacteriota</taxon>
        <taxon>Cyanophyceae</taxon>
        <taxon>Synechococcales</taxon>
        <taxon>Prochlorococcaceae</taxon>
        <taxon>Prochlorococcus</taxon>
    </lineage>
</organism>
<gene>
    <name type="ordered locus">A9601_13361</name>
</gene>
<accession>A2BS59</accession>
<reference key="1">
    <citation type="journal article" date="2007" name="PLoS Genet.">
        <title>Patterns and implications of gene gain and loss in the evolution of Prochlorococcus.</title>
        <authorList>
            <person name="Kettler G.C."/>
            <person name="Martiny A.C."/>
            <person name="Huang K."/>
            <person name="Zucker J."/>
            <person name="Coleman M.L."/>
            <person name="Rodrigue S."/>
            <person name="Chen F."/>
            <person name="Lapidus A."/>
            <person name="Ferriera S."/>
            <person name="Johnson J."/>
            <person name="Steglich C."/>
            <person name="Church G.M."/>
            <person name="Richardson P."/>
            <person name="Chisholm S.W."/>
        </authorList>
    </citation>
    <scope>NUCLEOTIDE SEQUENCE [LARGE SCALE GENOMIC DNA]</scope>
    <source>
        <strain>AS9601</strain>
    </source>
</reference>
<sequence length="203" mass="23123">MLILASASQSRKKLLENCQIEFIQIASKFDETTIQEKNIFNLALELSFQKANSLSENIQNLSLPEEFNYGTMEILGCDSIFEFKGEAYGKPSNKEEAFIRWKKMSGEFGFLHTGHTLIIGNFDSTSNIFKITEIIKKTVSSRVYFSNLEDWEIKSYVDTNEPLYCAGGFALEGIGGKYIEKIEGCFSNVMGLSLPWLRENLYR</sequence>
<proteinExistence type="inferred from homology"/>
<protein>
    <recommendedName>
        <fullName evidence="1">Nucleoside triphosphate pyrophosphatase</fullName>
        <ecNumber evidence="1">3.6.1.9</ecNumber>
    </recommendedName>
    <alternativeName>
        <fullName evidence="1">Nucleotide pyrophosphatase</fullName>
        <shortName evidence="1">Nucleotide PPase</shortName>
    </alternativeName>
</protein>
<feature type="chain" id="PRO_1000060958" description="Nucleoside triphosphate pyrophosphatase">
    <location>
        <begin position="1"/>
        <end position="203"/>
    </location>
</feature>
<feature type="active site" description="Proton acceptor" evidence="1">
    <location>
        <position position="78"/>
    </location>
</feature>
<evidence type="ECO:0000255" key="1">
    <source>
        <dbReference type="HAMAP-Rule" id="MF_00528"/>
    </source>
</evidence>
<comment type="function">
    <text evidence="1">Nucleoside triphosphate pyrophosphatase. May have a dual role in cell division arrest and in preventing the incorporation of modified nucleotides into cellular nucleic acids.</text>
</comment>
<comment type="catalytic activity">
    <reaction evidence="1">
        <text>a ribonucleoside 5'-triphosphate + H2O = a ribonucleoside 5'-phosphate + diphosphate + H(+)</text>
        <dbReference type="Rhea" id="RHEA:23996"/>
        <dbReference type="ChEBI" id="CHEBI:15377"/>
        <dbReference type="ChEBI" id="CHEBI:15378"/>
        <dbReference type="ChEBI" id="CHEBI:33019"/>
        <dbReference type="ChEBI" id="CHEBI:58043"/>
        <dbReference type="ChEBI" id="CHEBI:61557"/>
        <dbReference type="EC" id="3.6.1.9"/>
    </reaction>
</comment>
<comment type="catalytic activity">
    <reaction evidence="1">
        <text>a 2'-deoxyribonucleoside 5'-triphosphate + H2O = a 2'-deoxyribonucleoside 5'-phosphate + diphosphate + H(+)</text>
        <dbReference type="Rhea" id="RHEA:44644"/>
        <dbReference type="ChEBI" id="CHEBI:15377"/>
        <dbReference type="ChEBI" id="CHEBI:15378"/>
        <dbReference type="ChEBI" id="CHEBI:33019"/>
        <dbReference type="ChEBI" id="CHEBI:61560"/>
        <dbReference type="ChEBI" id="CHEBI:65317"/>
        <dbReference type="EC" id="3.6.1.9"/>
    </reaction>
</comment>
<comment type="cofactor">
    <cofactor evidence="1">
        <name>a divalent metal cation</name>
        <dbReference type="ChEBI" id="CHEBI:60240"/>
    </cofactor>
</comment>
<comment type="subcellular location">
    <subcellularLocation>
        <location evidence="1">Cytoplasm</location>
    </subcellularLocation>
</comment>
<comment type="similarity">
    <text evidence="1">Belongs to the Maf family.</text>
</comment>
<keyword id="KW-0963">Cytoplasm</keyword>
<keyword id="KW-0378">Hydrolase</keyword>
<keyword id="KW-0546">Nucleotide metabolism</keyword>
<name>NTPP_PROMS</name>